<name>USPE_HAEIN</name>
<organism>
    <name type="scientific">Haemophilus influenzae (strain ATCC 51907 / DSM 11121 / KW20 / Rd)</name>
    <dbReference type="NCBI Taxonomy" id="71421"/>
    <lineage>
        <taxon>Bacteria</taxon>
        <taxon>Pseudomonadati</taxon>
        <taxon>Pseudomonadota</taxon>
        <taxon>Gammaproteobacteria</taxon>
        <taxon>Pasteurellales</taxon>
        <taxon>Pasteurellaceae</taxon>
        <taxon>Haemophilus</taxon>
    </lineage>
</organism>
<keyword id="KW-0963">Cytoplasm</keyword>
<keyword id="KW-1185">Reference proteome</keyword>
<dbReference type="EMBL" id="L42023">
    <property type="protein sequence ID" value="AAC23063.1"/>
    <property type="status" value="ALT_INIT"/>
    <property type="molecule type" value="Genomic_DNA"/>
</dbReference>
<dbReference type="PIR" id="G64029">
    <property type="entry name" value="G64029"/>
</dbReference>
<dbReference type="RefSeq" id="NP_439575.2">
    <property type="nucleotide sequence ID" value="NC_000907.1"/>
</dbReference>
<dbReference type="SMR" id="P44195"/>
<dbReference type="STRING" id="71421.HI_1426"/>
<dbReference type="EnsemblBacteria" id="AAC23063">
    <property type="protein sequence ID" value="AAC23063"/>
    <property type="gene ID" value="HI_1426"/>
</dbReference>
<dbReference type="KEGG" id="hin:HI_1426"/>
<dbReference type="PATRIC" id="fig|71421.8.peg.1483"/>
<dbReference type="eggNOG" id="COG0589">
    <property type="taxonomic scope" value="Bacteria"/>
</dbReference>
<dbReference type="HOGENOM" id="CLU_049301_1_2_6"/>
<dbReference type="OrthoDB" id="239260at2"/>
<dbReference type="PhylomeDB" id="P44195"/>
<dbReference type="BioCyc" id="HINF71421:G1GJ1-1449-MONOMER"/>
<dbReference type="Proteomes" id="UP000000579">
    <property type="component" value="Chromosome"/>
</dbReference>
<dbReference type="GO" id="GO:0005737">
    <property type="term" value="C:cytoplasm"/>
    <property type="evidence" value="ECO:0007669"/>
    <property type="project" value="UniProtKB-SubCell"/>
</dbReference>
<dbReference type="CDD" id="cd23660">
    <property type="entry name" value="USP-E_repeat2"/>
    <property type="match status" value="1"/>
</dbReference>
<dbReference type="Gene3D" id="3.40.50.12370">
    <property type="match status" value="1"/>
</dbReference>
<dbReference type="InterPro" id="IPR006016">
    <property type="entry name" value="UspA"/>
</dbReference>
<dbReference type="NCBIfam" id="NF008380">
    <property type="entry name" value="PRK11175.1"/>
    <property type="match status" value="1"/>
</dbReference>
<dbReference type="PANTHER" id="PTHR47892">
    <property type="entry name" value="UNIVERSAL STRESS PROTEIN E"/>
    <property type="match status" value="1"/>
</dbReference>
<dbReference type="PANTHER" id="PTHR47892:SF1">
    <property type="entry name" value="UNIVERSAL STRESS PROTEIN E"/>
    <property type="match status" value="1"/>
</dbReference>
<dbReference type="Pfam" id="PF00582">
    <property type="entry name" value="Usp"/>
    <property type="match status" value="2"/>
</dbReference>
<dbReference type="SUPFAM" id="SSF52402">
    <property type="entry name" value="Adenine nucleotide alpha hydrolases-like"/>
    <property type="match status" value="2"/>
</dbReference>
<feature type="chain" id="PRO_0000147420" description="Universal stress protein E homolog">
    <location>
        <begin position="1"/>
        <end position="309"/>
    </location>
</feature>
<sequence length="309" mass="35087">MKFKNILVVLNPSNEKQYALARAVRLVEEQKNETKVKITALLSVYDLSYEMSALLSSEERSEMHQQVIEKHRHAVQYYLDKYANPEIELQSHIVWNSNEADAINEEVENNNYDLVVKYTKDEEKLTSLIFTPIDWQLLRKCPIPVLMVRDGDWKHPRRILVAVNVSGEQEYQDEFNQELVETGISLAENLNRGNVHLVAAYPSAPINMAIDLPEFNTSGYENGIRGQHLINMKALRQKFGIDEDHTHVREGFPEEVIPEVAKEIEAELVILGTVGRTGLSAALLGNTAEHVISKLSCNLLGIKPSKKDD</sequence>
<accession>P44195</accession>
<proteinExistence type="evidence at protein level"/>
<protein>
    <recommendedName>
        <fullName>Universal stress protein E homolog</fullName>
    </recommendedName>
</protein>
<evidence type="ECO:0000250" key="1"/>
<evidence type="ECO:0000305" key="2"/>
<comment type="function">
    <text evidence="1">Required for resistance to DNA-damaging agents.</text>
</comment>
<comment type="subcellular location">
    <subcellularLocation>
        <location evidence="1">Cytoplasm</location>
    </subcellularLocation>
</comment>
<comment type="similarity">
    <text evidence="2">Belongs to the universal stress protein A family.</text>
</comment>
<comment type="sequence caution" evidence="2">
    <conflict type="erroneous initiation">
        <sequence resource="EMBL-CDS" id="AAC23063"/>
    </conflict>
</comment>
<reference key="1">
    <citation type="journal article" date="1995" name="Science">
        <title>Whole-genome random sequencing and assembly of Haemophilus influenzae Rd.</title>
        <authorList>
            <person name="Fleischmann R.D."/>
            <person name="Adams M.D."/>
            <person name="White O."/>
            <person name="Clayton R.A."/>
            <person name="Kirkness E.F."/>
            <person name="Kerlavage A.R."/>
            <person name="Bult C.J."/>
            <person name="Tomb J.-F."/>
            <person name="Dougherty B.A."/>
            <person name="Merrick J.M."/>
            <person name="McKenney K."/>
            <person name="Sutton G.G."/>
            <person name="FitzHugh W."/>
            <person name="Fields C.A."/>
            <person name="Gocayne J.D."/>
            <person name="Scott J.D."/>
            <person name="Shirley R."/>
            <person name="Liu L.-I."/>
            <person name="Glodek A."/>
            <person name="Kelley J.M."/>
            <person name="Weidman J.F."/>
            <person name="Phillips C.A."/>
            <person name="Spriggs T."/>
            <person name="Hedblom E."/>
            <person name="Cotton M.D."/>
            <person name="Utterback T.R."/>
            <person name="Hanna M.C."/>
            <person name="Nguyen D.T."/>
            <person name="Saudek D.M."/>
            <person name="Brandon R.C."/>
            <person name="Fine L.D."/>
            <person name="Fritchman J.L."/>
            <person name="Fuhrmann J.L."/>
            <person name="Geoghagen N.S.M."/>
            <person name="Gnehm C.L."/>
            <person name="McDonald L.A."/>
            <person name="Small K.V."/>
            <person name="Fraser C.M."/>
            <person name="Smith H.O."/>
            <person name="Venter J.C."/>
        </authorList>
    </citation>
    <scope>NUCLEOTIDE SEQUENCE [LARGE SCALE GENOMIC DNA]</scope>
    <source>
        <strain>ATCC 51907 / DSM 11121 / KW20 / Rd</strain>
    </source>
</reference>
<reference key="2">
    <citation type="journal article" date="2000" name="Electrophoresis">
        <title>Two-dimensional map of the proteome of Haemophilus influenzae.</title>
        <authorList>
            <person name="Langen H."/>
            <person name="Takacs B."/>
            <person name="Evers S."/>
            <person name="Berndt P."/>
            <person name="Lahm H.W."/>
            <person name="Wipf B."/>
            <person name="Gray C."/>
            <person name="Fountoulakis M."/>
        </authorList>
    </citation>
    <scope>IDENTIFICATION BY MASS SPECTROMETRY</scope>
    <source>
        <strain>ATCC 51907 / DSM 11121 / KW20 / Rd</strain>
    </source>
</reference>
<gene>
    <name type="primary">uspE</name>
    <name type="ordered locus">HI_1426</name>
</gene>